<dbReference type="EC" id="3.1.3.77" evidence="1"/>
<dbReference type="EMBL" id="KE651168">
    <property type="protein sequence ID" value="EEB06359.1"/>
    <property type="molecule type" value="Genomic_DNA"/>
</dbReference>
<dbReference type="RefSeq" id="XP_002172652.1">
    <property type="nucleotide sequence ID" value="XM_002172616.2"/>
</dbReference>
<dbReference type="SMR" id="B6JXU1"/>
<dbReference type="STRING" id="402676.B6JXU1"/>
<dbReference type="EnsemblFungi" id="EEB06359">
    <property type="protein sequence ID" value="EEB06359"/>
    <property type="gene ID" value="SJAG_01404"/>
</dbReference>
<dbReference type="GeneID" id="7048152"/>
<dbReference type="JaponicusDB" id="SJAG_01404">
    <property type="gene designation" value="utr4"/>
</dbReference>
<dbReference type="VEuPathDB" id="FungiDB:SJAG_01404"/>
<dbReference type="eggNOG" id="KOG2630">
    <property type="taxonomic scope" value="Eukaryota"/>
</dbReference>
<dbReference type="HOGENOM" id="CLU_023273_1_1_1"/>
<dbReference type="OMA" id="EWDANGI"/>
<dbReference type="OrthoDB" id="272500at2759"/>
<dbReference type="UniPathway" id="UPA00904">
    <property type="reaction ID" value="UER00876"/>
</dbReference>
<dbReference type="UniPathway" id="UPA00904">
    <property type="reaction ID" value="UER00877"/>
</dbReference>
<dbReference type="Proteomes" id="UP000001744">
    <property type="component" value="Unassembled WGS sequence"/>
</dbReference>
<dbReference type="GO" id="GO:0005737">
    <property type="term" value="C:cytoplasm"/>
    <property type="evidence" value="ECO:0007669"/>
    <property type="project" value="UniProtKB-SubCell"/>
</dbReference>
<dbReference type="GO" id="GO:0005634">
    <property type="term" value="C:nucleus"/>
    <property type="evidence" value="ECO:0007669"/>
    <property type="project" value="UniProtKB-SubCell"/>
</dbReference>
<dbReference type="GO" id="GO:0043874">
    <property type="term" value="F:acireductone synthase activity"/>
    <property type="evidence" value="ECO:0000318"/>
    <property type="project" value="GO_Central"/>
</dbReference>
<dbReference type="GO" id="GO:0000287">
    <property type="term" value="F:magnesium ion binding"/>
    <property type="evidence" value="ECO:0007669"/>
    <property type="project" value="UniProtKB-UniRule"/>
</dbReference>
<dbReference type="GO" id="GO:0019509">
    <property type="term" value="P:L-methionine salvage from methylthioadenosine"/>
    <property type="evidence" value="ECO:0000318"/>
    <property type="project" value="GO_Central"/>
</dbReference>
<dbReference type="CDD" id="cd01629">
    <property type="entry name" value="HAD_EP"/>
    <property type="match status" value="1"/>
</dbReference>
<dbReference type="Gene3D" id="1.10.720.60">
    <property type="match status" value="1"/>
</dbReference>
<dbReference type="Gene3D" id="3.40.50.1000">
    <property type="entry name" value="HAD superfamily/HAD-like"/>
    <property type="match status" value="1"/>
</dbReference>
<dbReference type="HAMAP" id="MF_03117">
    <property type="entry name" value="Salvage_MtnC_euk"/>
    <property type="match status" value="1"/>
</dbReference>
<dbReference type="InterPro" id="IPR023943">
    <property type="entry name" value="Enolase-ppase_E1"/>
</dbReference>
<dbReference type="InterPro" id="IPR027511">
    <property type="entry name" value="ENOPH1_eukaryotes"/>
</dbReference>
<dbReference type="InterPro" id="IPR036412">
    <property type="entry name" value="HAD-like_sf"/>
</dbReference>
<dbReference type="InterPro" id="IPR006439">
    <property type="entry name" value="HAD-SF_hydro_IA"/>
</dbReference>
<dbReference type="InterPro" id="IPR023214">
    <property type="entry name" value="HAD_sf"/>
</dbReference>
<dbReference type="NCBIfam" id="TIGR01691">
    <property type="entry name" value="enolase-ppase"/>
    <property type="match status" value="1"/>
</dbReference>
<dbReference type="NCBIfam" id="TIGR01549">
    <property type="entry name" value="HAD-SF-IA-v1"/>
    <property type="match status" value="1"/>
</dbReference>
<dbReference type="PANTHER" id="PTHR20371">
    <property type="entry name" value="ENOLASE-PHOSPHATASE E1"/>
    <property type="match status" value="1"/>
</dbReference>
<dbReference type="PANTHER" id="PTHR20371:SF1">
    <property type="entry name" value="ENOLASE-PHOSPHATASE E1"/>
    <property type="match status" value="1"/>
</dbReference>
<dbReference type="Pfam" id="PF00702">
    <property type="entry name" value="Hydrolase"/>
    <property type="match status" value="1"/>
</dbReference>
<dbReference type="SFLD" id="SFLDG01133">
    <property type="entry name" value="C1.5.4:_Enolase-phosphatase_Li"/>
    <property type="match status" value="1"/>
</dbReference>
<dbReference type="SFLD" id="SFLDS00003">
    <property type="entry name" value="Haloacid_Dehalogenase"/>
    <property type="match status" value="1"/>
</dbReference>
<dbReference type="SUPFAM" id="SSF56784">
    <property type="entry name" value="HAD-like"/>
    <property type="match status" value="1"/>
</dbReference>
<reference key="1">
    <citation type="journal article" date="2011" name="Science">
        <title>Comparative functional genomics of the fission yeasts.</title>
        <authorList>
            <person name="Rhind N."/>
            <person name="Chen Z."/>
            <person name="Yassour M."/>
            <person name="Thompson D.A."/>
            <person name="Haas B.J."/>
            <person name="Habib N."/>
            <person name="Wapinski I."/>
            <person name="Roy S."/>
            <person name="Lin M.F."/>
            <person name="Heiman D.I."/>
            <person name="Young S.K."/>
            <person name="Furuya K."/>
            <person name="Guo Y."/>
            <person name="Pidoux A."/>
            <person name="Chen H.M."/>
            <person name="Robbertse B."/>
            <person name="Goldberg J.M."/>
            <person name="Aoki K."/>
            <person name="Bayne E.H."/>
            <person name="Berlin A.M."/>
            <person name="Desjardins C.A."/>
            <person name="Dobbs E."/>
            <person name="Dukaj L."/>
            <person name="Fan L."/>
            <person name="FitzGerald M.G."/>
            <person name="French C."/>
            <person name="Gujja S."/>
            <person name="Hansen K."/>
            <person name="Keifenheim D."/>
            <person name="Levin J.Z."/>
            <person name="Mosher R.A."/>
            <person name="Mueller C.A."/>
            <person name="Pfiffner J."/>
            <person name="Priest M."/>
            <person name="Russ C."/>
            <person name="Smialowska A."/>
            <person name="Swoboda P."/>
            <person name="Sykes S.M."/>
            <person name="Vaughn M."/>
            <person name="Vengrova S."/>
            <person name="Yoder R."/>
            <person name="Zeng Q."/>
            <person name="Allshire R."/>
            <person name="Baulcombe D."/>
            <person name="Birren B.W."/>
            <person name="Brown W."/>
            <person name="Ekwall K."/>
            <person name="Kellis M."/>
            <person name="Leatherwood J."/>
            <person name="Levin H."/>
            <person name="Margalit H."/>
            <person name="Martienssen R."/>
            <person name="Nieduszynski C.A."/>
            <person name="Spatafora J.W."/>
            <person name="Friedman N."/>
            <person name="Dalgaard J.Z."/>
            <person name="Baumann P."/>
            <person name="Niki H."/>
            <person name="Regev A."/>
            <person name="Nusbaum C."/>
        </authorList>
    </citation>
    <scope>NUCLEOTIDE SEQUENCE [LARGE SCALE GENOMIC DNA]</scope>
    <source>
        <strain>yFS275 / FY16936</strain>
    </source>
</reference>
<evidence type="ECO:0000255" key="1">
    <source>
        <dbReference type="HAMAP-Rule" id="MF_03117"/>
    </source>
</evidence>
<protein>
    <recommendedName>
        <fullName evidence="1">Enolase-phosphatase E1</fullName>
        <ecNumber evidence="1">3.1.3.77</ecNumber>
    </recommendedName>
    <alternativeName>
        <fullName evidence="1">2,3-diketo-5-methylthio-1-phosphopentane phosphatase</fullName>
    </alternativeName>
</protein>
<sequence length="215" mass="23720">MPTPIRTILLDIEGTVGSISFVKNVLFPLAKQQYAEYVHKHMDDASVRVFGNSLDEIVDKLNTLHDSGSKDQAFKALQGSIWKDAYENGKVVAHLFPDVVPLLKRAADKGVRVCIYSSGSVPAQKLYFHYSEYGDLSNYISEYYDTSIGPKVEADSYKRIVGSDDPATWLFLSDNVHELDAARQSGLKVGLAVRPGNEPVSSSGYSEYGSFDSLL</sequence>
<accession>B6JXU1</accession>
<keyword id="KW-0028">Amino-acid biosynthesis</keyword>
<keyword id="KW-0963">Cytoplasm</keyword>
<keyword id="KW-0378">Hydrolase</keyword>
<keyword id="KW-0460">Magnesium</keyword>
<keyword id="KW-0479">Metal-binding</keyword>
<keyword id="KW-0486">Methionine biosynthesis</keyword>
<keyword id="KW-0539">Nucleus</keyword>
<keyword id="KW-1185">Reference proteome</keyword>
<comment type="function">
    <text evidence="1">Bifunctional enzyme that catalyzes the enolization of 2,3-diketo-5-methylthiopentyl-1-phosphate (DK-MTP-1-P) into the intermediate 2-hydroxy-3-keto-5-methylthiopentenyl-1-phosphate (HK-MTPenyl-1-P), which is then dephosphorylated to form the acireductone 1,2-dihydroxy-3-keto-5-methylthiopentene (DHK-MTPene).</text>
</comment>
<comment type="catalytic activity">
    <reaction evidence="1">
        <text>5-methylsulfanyl-2,3-dioxopentyl phosphate + H2O = 1,2-dihydroxy-5-(methylsulfanyl)pent-1-en-3-one + phosphate</text>
        <dbReference type="Rhea" id="RHEA:21700"/>
        <dbReference type="ChEBI" id="CHEBI:15377"/>
        <dbReference type="ChEBI" id="CHEBI:43474"/>
        <dbReference type="ChEBI" id="CHEBI:49252"/>
        <dbReference type="ChEBI" id="CHEBI:58828"/>
        <dbReference type="EC" id="3.1.3.77"/>
    </reaction>
</comment>
<comment type="cofactor">
    <cofactor evidence="1">
        <name>Mg(2+)</name>
        <dbReference type="ChEBI" id="CHEBI:18420"/>
    </cofactor>
    <text evidence="1">Binds 1 Mg(2+) ion per subunit.</text>
</comment>
<comment type="pathway">
    <text evidence="1">Amino-acid biosynthesis; L-methionine biosynthesis via salvage pathway; L-methionine from S-methyl-5-thio-alpha-D-ribose 1-phosphate: step 3/6.</text>
</comment>
<comment type="pathway">
    <text evidence="1">Amino-acid biosynthesis; L-methionine biosynthesis via salvage pathway; L-methionine from S-methyl-5-thio-alpha-D-ribose 1-phosphate: step 4/6.</text>
</comment>
<comment type="subunit">
    <text evidence="1">Monomer.</text>
</comment>
<comment type="subcellular location">
    <subcellularLocation>
        <location evidence="1">Cytoplasm</location>
    </subcellularLocation>
    <subcellularLocation>
        <location evidence="1">Nucleus</location>
    </subcellularLocation>
</comment>
<comment type="similarity">
    <text evidence="1">Belongs to the HAD-like hydrolase superfamily. MasA/MtnC family.</text>
</comment>
<organism>
    <name type="scientific">Schizosaccharomyces japonicus (strain yFS275 / FY16936)</name>
    <name type="common">Fission yeast</name>
    <dbReference type="NCBI Taxonomy" id="402676"/>
    <lineage>
        <taxon>Eukaryota</taxon>
        <taxon>Fungi</taxon>
        <taxon>Dikarya</taxon>
        <taxon>Ascomycota</taxon>
        <taxon>Taphrinomycotina</taxon>
        <taxon>Schizosaccharomycetes</taxon>
        <taxon>Schizosaccharomycetales</taxon>
        <taxon>Schizosaccharomycetaceae</taxon>
        <taxon>Schizosaccharomyces</taxon>
    </lineage>
</organism>
<gene>
    <name type="primary">utr4</name>
    <name type="ORF">SJAG_01404</name>
</gene>
<name>ENOPH_SCHJY</name>
<proteinExistence type="inferred from homology"/>
<feature type="chain" id="PRO_0000394011" description="Enolase-phosphatase E1">
    <location>
        <begin position="1"/>
        <end position="215"/>
    </location>
</feature>
<feature type="binding site" evidence="1">
    <location>
        <position position="11"/>
    </location>
    <ligand>
        <name>Mg(2+)</name>
        <dbReference type="ChEBI" id="CHEBI:18420"/>
    </ligand>
</feature>
<feature type="binding site" evidence="1">
    <location>
        <position position="13"/>
    </location>
    <ligand>
        <name>Mg(2+)</name>
        <dbReference type="ChEBI" id="CHEBI:18420"/>
    </ligand>
</feature>
<feature type="binding site" evidence="1">
    <location>
        <begin position="117"/>
        <end position="118"/>
    </location>
    <ligand>
        <name>substrate</name>
    </ligand>
</feature>
<feature type="binding site" evidence="1">
    <location>
        <position position="151"/>
    </location>
    <ligand>
        <name>substrate</name>
    </ligand>
</feature>
<feature type="binding site" evidence="1">
    <location>
        <position position="174"/>
    </location>
    <ligand>
        <name>Mg(2+)</name>
        <dbReference type="ChEBI" id="CHEBI:18420"/>
    </ligand>
</feature>